<organism>
    <name type="scientific">Bdellovibrio bacteriovorus (strain ATCC 15356 / DSM 50701 / NCIMB 9529 / HD100)</name>
    <dbReference type="NCBI Taxonomy" id="264462"/>
    <lineage>
        <taxon>Bacteria</taxon>
        <taxon>Pseudomonadati</taxon>
        <taxon>Bdellovibrionota</taxon>
        <taxon>Bdellovibrionia</taxon>
        <taxon>Bdellovibrionales</taxon>
        <taxon>Pseudobdellovibrionaceae</taxon>
        <taxon>Bdellovibrio</taxon>
    </lineage>
</organism>
<feature type="chain" id="PRO_0000073241" description="ATP synthase gamma chain">
    <location>
        <begin position="1"/>
        <end position="295"/>
    </location>
</feature>
<keyword id="KW-0066">ATP synthesis</keyword>
<keyword id="KW-0997">Cell inner membrane</keyword>
<keyword id="KW-1003">Cell membrane</keyword>
<keyword id="KW-0139">CF(1)</keyword>
<keyword id="KW-0375">Hydrogen ion transport</keyword>
<keyword id="KW-0406">Ion transport</keyword>
<keyword id="KW-0472">Membrane</keyword>
<keyword id="KW-1185">Reference proteome</keyword>
<keyword id="KW-0813">Transport</keyword>
<proteinExistence type="inferred from homology"/>
<gene>
    <name evidence="1" type="primary">atpG</name>
    <name type="ordered locus">Bd3898</name>
</gene>
<evidence type="ECO:0000255" key="1">
    <source>
        <dbReference type="HAMAP-Rule" id="MF_00815"/>
    </source>
</evidence>
<name>ATPG_BDEBA</name>
<reference key="1">
    <citation type="journal article" date="2004" name="Science">
        <title>A predator unmasked: life cycle of Bdellovibrio bacteriovorus from a genomic perspective.</title>
        <authorList>
            <person name="Rendulic S."/>
            <person name="Jagtap P."/>
            <person name="Rosinus A."/>
            <person name="Eppinger M."/>
            <person name="Baar C."/>
            <person name="Lanz C."/>
            <person name="Keller H."/>
            <person name="Lambert C."/>
            <person name="Evans K.J."/>
            <person name="Goesmann A."/>
            <person name="Meyer F."/>
            <person name="Sockett R.E."/>
            <person name="Schuster S.C."/>
        </authorList>
    </citation>
    <scope>NUCLEOTIDE SEQUENCE [LARGE SCALE GENOMIC DNA]</scope>
    <source>
        <strain>ATCC 15356 / DSM 50701 / NCIMB 9529 / HD100</strain>
    </source>
</reference>
<protein>
    <recommendedName>
        <fullName evidence="1">ATP synthase gamma chain</fullName>
    </recommendedName>
    <alternativeName>
        <fullName evidence="1">ATP synthase F1 sector gamma subunit</fullName>
    </alternativeName>
    <alternativeName>
        <fullName evidence="1">F-ATPase gamma subunit</fullName>
    </alternativeName>
</protein>
<dbReference type="EMBL" id="BX842656">
    <property type="protein sequence ID" value="CAE81253.1"/>
    <property type="molecule type" value="Genomic_DNA"/>
</dbReference>
<dbReference type="RefSeq" id="WP_011166196.1">
    <property type="nucleotide sequence ID" value="NC_005363.1"/>
</dbReference>
<dbReference type="SMR" id="Q6MGM6"/>
<dbReference type="STRING" id="264462.Bd3898"/>
<dbReference type="GeneID" id="93014664"/>
<dbReference type="KEGG" id="bba:Bd3898"/>
<dbReference type="eggNOG" id="COG0224">
    <property type="taxonomic scope" value="Bacteria"/>
</dbReference>
<dbReference type="HOGENOM" id="CLU_050669_0_1_7"/>
<dbReference type="Proteomes" id="UP000008080">
    <property type="component" value="Chromosome"/>
</dbReference>
<dbReference type="GO" id="GO:0005886">
    <property type="term" value="C:plasma membrane"/>
    <property type="evidence" value="ECO:0007669"/>
    <property type="project" value="UniProtKB-SubCell"/>
</dbReference>
<dbReference type="GO" id="GO:0045259">
    <property type="term" value="C:proton-transporting ATP synthase complex"/>
    <property type="evidence" value="ECO:0007669"/>
    <property type="project" value="UniProtKB-KW"/>
</dbReference>
<dbReference type="GO" id="GO:0005524">
    <property type="term" value="F:ATP binding"/>
    <property type="evidence" value="ECO:0007669"/>
    <property type="project" value="UniProtKB-UniRule"/>
</dbReference>
<dbReference type="GO" id="GO:0046933">
    <property type="term" value="F:proton-transporting ATP synthase activity, rotational mechanism"/>
    <property type="evidence" value="ECO:0007669"/>
    <property type="project" value="UniProtKB-UniRule"/>
</dbReference>
<dbReference type="GO" id="GO:0042777">
    <property type="term" value="P:proton motive force-driven plasma membrane ATP synthesis"/>
    <property type="evidence" value="ECO:0007669"/>
    <property type="project" value="UniProtKB-UniRule"/>
</dbReference>
<dbReference type="CDD" id="cd12151">
    <property type="entry name" value="F1-ATPase_gamma"/>
    <property type="match status" value="1"/>
</dbReference>
<dbReference type="FunFam" id="3.40.1380.10:FF:000006">
    <property type="entry name" value="ATP synthase gamma chain"/>
    <property type="match status" value="1"/>
</dbReference>
<dbReference type="Gene3D" id="3.40.1380.10">
    <property type="match status" value="1"/>
</dbReference>
<dbReference type="Gene3D" id="1.10.287.80">
    <property type="entry name" value="ATP synthase, gamma subunit, helix hairpin domain"/>
    <property type="match status" value="2"/>
</dbReference>
<dbReference type="HAMAP" id="MF_00815">
    <property type="entry name" value="ATP_synth_gamma_bact"/>
    <property type="match status" value="1"/>
</dbReference>
<dbReference type="InterPro" id="IPR035968">
    <property type="entry name" value="ATP_synth_F1_ATPase_gsu"/>
</dbReference>
<dbReference type="InterPro" id="IPR000131">
    <property type="entry name" value="ATP_synth_F1_gsu"/>
</dbReference>
<dbReference type="InterPro" id="IPR023632">
    <property type="entry name" value="ATP_synth_F1_gsu_CS"/>
</dbReference>
<dbReference type="NCBIfam" id="TIGR01146">
    <property type="entry name" value="ATPsyn_F1gamma"/>
    <property type="match status" value="1"/>
</dbReference>
<dbReference type="PANTHER" id="PTHR11693">
    <property type="entry name" value="ATP SYNTHASE GAMMA CHAIN"/>
    <property type="match status" value="1"/>
</dbReference>
<dbReference type="PANTHER" id="PTHR11693:SF22">
    <property type="entry name" value="ATP SYNTHASE SUBUNIT GAMMA, MITOCHONDRIAL"/>
    <property type="match status" value="1"/>
</dbReference>
<dbReference type="Pfam" id="PF00231">
    <property type="entry name" value="ATP-synt"/>
    <property type="match status" value="1"/>
</dbReference>
<dbReference type="PRINTS" id="PR00126">
    <property type="entry name" value="ATPASEGAMMA"/>
</dbReference>
<dbReference type="SUPFAM" id="SSF52943">
    <property type="entry name" value="ATP synthase (F1-ATPase), gamma subunit"/>
    <property type="match status" value="1"/>
</dbReference>
<dbReference type="PROSITE" id="PS00153">
    <property type="entry name" value="ATPASE_GAMMA"/>
    <property type="match status" value="1"/>
</dbReference>
<accession>Q6MGM6</accession>
<comment type="function">
    <text evidence="1">Produces ATP from ADP in the presence of a proton gradient across the membrane. The gamma chain is believed to be important in regulating ATPase activity and the flow of protons through the CF(0) complex.</text>
</comment>
<comment type="subunit">
    <text evidence="1">F-type ATPases have 2 components, CF(1) - the catalytic core - and CF(0) - the membrane proton channel. CF(1) has five subunits: alpha(3), beta(3), gamma(1), delta(1), epsilon(1). CF(0) has three main subunits: a, b and c.</text>
</comment>
<comment type="subcellular location">
    <subcellularLocation>
        <location evidence="1">Cell inner membrane</location>
        <topology evidence="1">Peripheral membrane protein</topology>
    </subcellularLocation>
</comment>
<comment type="similarity">
    <text evidence="1">Belongs to the ATPase gamma chain family.</text>
</comment>
<sequence length="295" mass="33164">MASLKDIRAQIESTKNTQQITKAMKLVSAAKLRKAQNNIVNMRPYALALRQVIADIAVTNKVSHPLMEKKEQVKNVLLVVITSDRGLCGAFNSNINKFAEAYYNSNKASLEKIDFLFVGRRGHDYFARRGIKAVDYITKLDKDISYELASKVANRVMNDYLEGSYDEVRIVHNEFKSAISQVVTAETLLPIDLGMTTFKKEADTASNFAVDMIFEPAPEQIIKELLEKHFELQVYRCMSESVAGEHGARMSAMENATNNAKEMINKLTLTYNKLRQEKITTELIEIVSGAEALKG</sequence>